<organism>
    <name type="scientific">Bacillus pumilus (strain SAFR-032)</name>
    <dbReference type="NCBI Taxonomy" id="315750"/>
    <lineage>
        <taxon>Bacteria</taxon>
        <taxon>Bacillati</taxon>
        <taxon>Bacillota</taxon>
        <taxon>Bacilli</taxon>
        <taxon>Bacillales</taxon>
        <taxon>Bacillaceae</taxon>
        <taxon>Bacillus</taxon>
    </lineage>
</organism>
<keyword id="KW-0474">Menaquinone biosynthesis</keyword>
<keyword id="KW-0489">Methyltransferase</keyword>
<keyword id="KW-0949">S-adenosyl-L-methionine</keyword>
<keyword id="KW-0808">Transferase</keyword>
<accession>A8FEK9</accession>
<reference key="1">
    <citation type="journal article" date="2007" name="PLoS ONE">
        <title>Paradoxical DNA repair and peroxide resistance gene conservation in Bacillus pumilus SAFR-032.</title>
        <authorList>
            <person name="Gioia J."/>
            <person name="Yerrapragada S."/>
            <person name="Qin X."/>
            <person name="Jiang H."/>
            <person name="Igboeli O.C."/>
            <person name="Muzny D."/>
            <person name="Dugan-Rocha S."/>
            <person name="Ding Y."/>
            <person name="Hawes A."/>
            <person name="Liu W."/>
            <person name="Perez L."/>
            <person name="Kovar C."/>
            <person name="Dinh H."/>
            <person name="Lee S."/>
            <person name="Nazareth L."/>
            <person name="Blyth P."/>
            <person name="Holder M."/>
            <person name="Buhay C."/>
            <person name="Tirumalai M.R."/>
            <person name="Liu Y."/>
            <person name="Dasgupta I."/>
            <person name="Bokhetache L."/>
            <person name="Fujita M."/>
            <person name="Karouia F."/>
            <person name="Eswara Moorthy P."/>
            <person name="Siefert J."/>
            <person name="Uzman A."/>
            <person name="Buzumbo P."/>
            <person name="Verma A."/>
            <person name="Zwiya H."/>
            <person name="McWilliams B.D."/>
            <person name="Olowu A."/>
            <person name="Clinkenbeard K.D."/>
            <person name="Newcombe D."/>
            <person name="Golebiewski L."/>
            <person name="Petrosino J.F."/>
            <person name="Nicholson W.L."/>
            <person name="Fox G.E."/>
            <person name="Venkateswaran K."/>
            <person name="Highlander S.K."/>
            <person name="Weinstock G.M."/>
        </authorList>
    </citation>
    <scope>NUCLEOTIDE SEQUENCE [LARGE SCALE GENOMIC DNA]</scope>
    <source>
        <strain>SAFR-032</strain>
    </source>
</reference>
<feature type="chain" id="PRO_1000070196" description="Demethylmenaquinone methyltransferase">
    <location>
        <begin position="1"/>
        <end position="234"/>
    </location>
</feature>
<feature type="binding site" evidence="1">
    <location>
        <position position="58"/>
    </location>
    <ligand>
        <name>S-adenosyl-L-methionine</name>
        <dbReference type="ChEBI" id="CHEBI:59789"/>
    </ligand>
</feature>
<feature type="binding site" evidence="1">
    <location>
        <position position="79"/>
    </location>
    <ligand>
        <name>S-adenosyl-L-methionine</name>
        <dbReference type="ChEBI" id="CHEBI:59789"/>
    </ligand>
</feature>
<feature type="binding site" evidence="1">
    <location>
        <begin position="106"/>
        <end position="107"/>
    </location>
    <ligand>
        <name>S-adenosyl-L-methionine</name>
        <dbReference type="ChEBI" id="CHEBI:59789"/>
    </ligand>
</feature>
<comment type="function">
    <text evidence="1">Methyltransferase required for the conversion of demethylmenaquinol (DMKH2) to menaquinol (MKH2).</text>
</comment>
<comment type="catalytic activity">
    <reaction evidence="1">
        <text>a 2-demethylmenaquinol + S-adenosyl-L-methionine = a menaquinol + S-adenosyl-L-homocysteine + H(+)</text>
        <dbReference type="Rhea" id="RHEA:42640"/>
        <dbReference type="Rhea" id="RHEA-COMP:9539"/>
        <dbReference type="Rhea" id="RHEA-COMP:9563"/>
        <dbReference type="ChEBI" id="CHEBI:15378"/>
        <dbReference type="ChEBI" id="CHEBI:18151"/>
        <dbReference type="ChEBI" id="CHEBI:55437"/>
        <dbReference type="ChEBI" id="CHEBI:57856"/>
        <dbReference type="ChEBI" id="CHEBI:59789"/>
        <dbReference type="EC" id="2.1.1.163"/>
    </reaction>
</comment>
<comment type="pathway">
    <text evidence="1">Quinol/quinone metabolism; menaquinone biosynthesis; menaquinol from 1,4-dihydroxy-2-naphthoate: step 2/2.</text>
</comment>
<comment type="similarity">
    <text evidence="1">Belongs to the class I-like SAM-binding methyltransferase superfamily. MenG/UbiE family.</text>
</comment>
<gene>
    <name evidence="1" type="primary">menG</name>
    <name type="ordered locus">BPUM_2006</name>
</gene>
<name>MENG_BACP2</name>
<dbReference type="EC" id="2.1.1.163" evidence="1"/>
<dbReference type="EMBL" id="CP000813">
    <property type="protein sequence ID" value="ABV62676.1"/>
    <property type="molecule type" value="Genomic_DNA"/>
</dbReference>
<dbReference type="RefSeq" id="WP_012010387.1">
    <property type="nucleotide sequence ID" value="NC_009848.4"/>
</dbReference>
<dbReference type="SMR" id="A8FEK9"/>
<dbReference type="STRING" id="315750.BPUM_2006"/>
<dbReference type="GeneID" id="5621272"/>
<dbReference type="KEGG" id="bpu:BPUM_2006"/>
<dbReference type="eggNOG" id="COG2226">
    <property type="taxonomic scope" value="Bacteria"/>
</dbReference>
<dbReference type="HOGENOM" id="CLU_037990_0_0_9"/>
<dbReference type="OrthoDB" id="9808140at2"/>
<dbReference type="UniPathway" id="UPA00079">
    <property type="reaction ID" value="UER00169"/>
</dbReference>
<dbReference type="Proteomes" id="UP000001355">
    <property type="component" value="Chromosome"/>
</dbReference>
<dbReference type="GO" id="GO:0043770">
    <property type="term" value="F:demethylmenaquinone methyltransferase activity"/>
    <property type="evidence" value="ECO:0007669"/>
    <property type="project" value="UniProtKB-UniRule"/>
</dbReference>
<dbReference type="GO" id="GO:0009234">
    <property type="term" value="P:menaquinone biosynthetic process"/>
    <property type="evidence" value="ECO:0007669"/>
    <property type="project" value="UniProtKB-UniRule"/>
</dbReference>
<dbReference type="GO" id="GO:0032259">
    <property type="term" value="P:methylation"/>
    <property type="evidence" value="ECO:0007669"/>
    <property type="project" value="UniProtKB-KW"/>
</dbReference>
<dbReference type="CDD" id="cd02440">
    <property type="entry name" value="AdoMet_MTases"/>
    <property type="match status" value="1"/>
</dbReference>
<dbReference type="FunFam" id="3.40.50.150:FF:000086">
    <property type="entry name" value="Demethylmenaquinone methyltransferase"/>
    <property type="match status" value="1"/>
</dbReference>
<dbReference type="Gene3D" id="3.40.50.150">
    <property type="entry name" value="Vaccinia Virus protein VP39"/>
    <property type="match status" value="1"/>
</dbReference>
<dbReference type="HAMAP" id="MF_01813">
    <property type="entry name" value="MenG_UbiE_methyltr"/>
    <property type="match status" value="1"/>
</dbReference>
<dbReference type="InterPro" id="IPR014122">
    <property type="entry name" value="MenG_heptapren"/>
</dbReference>
<dbReference type="InterPro" id="IPR029063">
    <property type="entry name" value="SAM-dependent_MTases_sf"/>
</dbReference>
<dbReference type="InterPro" id="IPR004033">
    <property type="entry name" value="UbiE/COQ5_MeTrFase"/>
</dbReference>
<dbReference type="InterPro" id="IPR023576">
    <property type="entry name" value="UbiE/COQ5_MeTrFase_CS"/>
</dbReference>
<dbReference type="NCBIfam" id="TIGR02752">
    <property type="entry name" value="MenG_heptapren"/>
    <property type="match status" value="1"/>
</dbReference>
<dbReference type="NCBIfam" id="TIGR01934">
    <property type="entry name" value="MenG_MenH_UbiE"/>
    <property type="match status" value="1"/>
</dbReference>
<dbReference type="NCBIfam" id="NF001243">
    <property type="entry name" value="PRK00216.1-4"/>
    <property type="match status" value="1"/>
</dbReference>
<dbReference type="NCBIfam" id="NF001244">
    <property type="entry name" value="PRK00216.1-5"/>
    <property type="match status" value="1"/>
</dbReference>
<dbReference type="PANTHER" id="PTHR43591:SF24">
    <property type="entry name" value="2-METHOXY-6-POLYPRENYL-1,4-BENZOQUINOL METHYLASE, MITOCHONDRIAL"/>
    <property type="match status" value="1"/>
</dbReference>
<dbReference type="PANTHER" id="PTHR43591">
    <property type="entry name" value="METHYLTRANSFERASE"/>
    <property type="match status" value="1"/>
</dbReference>
<dbReference type="Pfam" id="PF01209">
    <property type="entry name" value="Ubie_methyltran"/>
    <property type="match status" value="1"/>
</dbReference>
<dbReference type="SUPFAM" id="SSF53335">
    <property type="entry name" value="S-adenosyl-L-methionine-dependent methyltransferases"/>
    <property type="match status" value="1"/>
</dbReference>
<dbReference type="PROSITE" id="PS51608">
    <property type="entry name" value="SAM_MT_UBIE"/>
    <property type="match status" value="1"/>
</dbReference>
<dbReference type="PROSITE" id="PS01183">
    <property type="entry name" value="UBIE_1"/>
    <property type="match status" value="1"/>
</dbReference>
<dbReference type="PROSITE" id="PS01184">
    <property type="entry name" value="UBIE_2"/>
    <property type="match status" value="1"/>
</dbReference>
<proteinExistence type="inferred from homology"/>
<sequence>MQQSKEQRVHGVFEKIYKNYDQMNSVISFKQHKKWRDKTMKLMNVQKGAKALDVCCGTADWTIALADAVGDKGEVKGLDFSKNMLSVGETKVKSGGYNQIELLHGNAMELPFEDNTFDYVTIGFGLRNVPDYLTVLKEMTRVVKPGGMVVCLETSQPEMIGFKQGYYVYFKYIMPLFGKLFAKSYQEYSWLQESAKAFPGMKELAALFEEAGLSDVSYHPFTGGVAATHIGKKL</sequence>
<protein>
    <recommendedName>
        <fullName evidence="1">Demethylmenaquinone methyltransferase</fullName>
        <ecNumber evidence="1">2.1.1.163</ecNumber>
    </recommendedName>
</protein>
<evidence type="ECO:0000255" key="1">
    <source>
        <dbReference type="HAMAP-Rule" id="MF_01813"/>
    </source>
</evidence>